<feature type="chain" id="PRO_0000131494" description="Small ribosomal subunit protein uS5">
    <location>
        <begin position="1"/>
        <end position="201"/>
    </location>
</feature>
<feature type="domain" description="S5 DRBM" evidence="1">
    <location>
        <begin position="31"/>
        <end position="94"/>
    </location>
</feature>
<feature type="region of interest" description="Disordered" evidence="2">
    <location>
        <begin position="1"/>
        <end position="28"/>
    </location>
</feature>
<feature type="region of interest" description="Disordered" evidence="2">
    <location>
        <begin position="173"/>
        <end position="201"/>
    </location>
</feature>
<feature type="compositionally biased region" description="Basic and acidic residues" evidence="2">
    <location>
        <begin position="181"/>
        <end position="191"/>
    </location>
</feature>
<evidence type="ECO:0000255" key="1">
    <source>
        <dbReference type="HAMAP-Rule" id="MF_01307"/>
    </source>
</evidence>
<evidence type="ECO:0000256" key="2">
    <source>
        <dbReference type="SAM" id="MobiDB-lite"/>
    </source>
</evidence>
<evidence type="ECO:0000305" key="3"/>
<reference key="1">
    <citation type="journal article" date="2001" name="Proc. Natl. Acad. Sci. U.S.A.">
        <title>Complete genome sequence of Caulobacter crescentus.</title>
        <authorList>
            <person name="Nierman W.C."/>
            <person name="Feldblyum T.V."/>
            <person name="Laub M.T."/>
            <person name="Paulsen I.T."/>
            <person name="Nelson K.E."/>
            <person name="Eisen J.A."/>
            <person name="Heidelberg J.F."/>
            <person name="Alley M.R.K."/>
            <person name="Ohta N."/>
            <person name="Maddock J.R."/>
            <person name="Potocka I."/>
            <person name="Nelson W.C."/>
            <person name="Newton A."/>
            <person name="Stephens C."/>
            <person name="Phadke N.D."/>
            <person name="Ely B."/>
            <person name="DeBoy R.T."/>
            <person name="Dodson R.J."/>
            <person name="Durkin A.S."/>
            <person name="Gwinn M.L."/>
            <person name="Haft D.H."/>
            <person name="Kolonay J.F."/>
            <person name="Smit J."/>
            <person name="Craven M.B."/>
            <person name="Khouri H.M."/>
            <person name="Shetty J."/>
            <person name="Berry K.J."/>
            <person name="Utterback T.R."/>
            <person name="Tran K."/>
            <person name="Wolf A.M."/>
            <person name="Vamathevan J.J."/>
            <person name="Ermolaeva M.D."/>
            <person name="White O."/>
            <person name="Salzberg S.L."/>
            <person name="Venter J.C."/>
            <person name="Shapiro L."/>
            <person name="Fraser C.M."/>
        </authorList>
    </citation>
    <scope>NUCLEOTIDE SEQUENCE [LARGE SCALE GENOMIC DNA]</scope>
    <source>
        <strain>ATCC 19089 / CIP 103742 / CB 15</strain>
    </source>
</reference>
<keyword id="KW-1185">Reference proteome</keyword>
<keyword id="KW-0687">Ribonucleoprotein</keyword>
<keyword id="KW-0689">Ribosomal protein</keyword>
<keyword id="KW-0694">RNA-binding</keyword>
<keyword id="KW-0699">rRNA-binding</keyword>
<proteinExistence type="inferred from homology"/>
<dbReference type="EMBL" id="AE005673">
    <property type="protein sequence ID" value="AAK23246.1"/>
    <property type="molecule type" value="Genomic_DNA"/>
</dbReference>
<dbReference type="PIR" id="B87406">
    <property type="entry name" value="B87406"/>
</dbReference>
<dbReference type="RefSeq" id="NP_420078.1">
    <property type="nucleotide sequence ID" value="NC_002696.2"/>
</dbReference>
<dbReference type="RefSeq" id="WP_010919144.1">
    <property type="nucleotide sequence ID" value="NC_002696.2"/>
</dbReference>
<dbReference type="SMR" id="Q9A8T6"/>
<dbReference type="STRING" id="190650.CC_1265"/>
<dbReference type="EnsemblBacteria" id="AAK23246">
    <property type="protein sequence ID" value="AAK23246"/>
    <property type="gene ID" value="CC_1265"/>
</dbReference>
<dbReference type="KEGG" id="ccr:CC_1265"/>
<dbReference type="PATRIC" id="fig|190650.5.peg.1290"/>
<dbReference type="eggNOG" id="COG0098">
    <property type="taxonomic scope" value="Bacteria"/>
</dbReference>
<dbReference type="HOGENOM" id="CLU_065898_2_2_5"/>
<dbReference type="BioCyc" id="CAULO:CC1265-MONOMER"/>
<dbReference type="Proteomes" id="UP000001816">
    <property type="component" value="Chromosome"/>
</dbReference>
<dbReference type="GO" id="GO:0015935">
    <property type="term" value="C:small ribosomal subunit"/>
    <property type="evidence" value="ECO:0007669"/>
    <property type="project" value="InterPro"/>
</dbReference>
<dbReference type="GO" id="GO:0019843">
    <property type="term" value="F:rRNA binding"/>
    <property type="evidence" value="ECO:0007669"/>
    <property type="project" value="UniProtKB-UniRule"/>
</dbReference>
<dbReference type="GO" id="GO:0003735">
    <property type="term" value="F:structural constituent of ribosome"/>
    <property type="evidence" value="ECO:0007669"/>
    <property type="project" value="InterPro"/>
</dbReference>
<dbReference type="GO" id="GO:0006412">
    <property type="term" value="P:translation"/>
    <property type="evidence" value="ECO:0007669"/>
    <property type="project" value="UniProtKB-UniRule"/>
</dbReference>
<dbReference type="FunFam" id="3.30.160.20:FF:000001">
    <property type="entry name" value="30S ribosomal protein S5"/>
    <property type="match status" value="1"/>
</dbReference>
<dbReference type="FunFam" id="3.30.230.10:FF:000002">
    <property type="entry name" value="30S ribosomal protein S5"/>
    <property type="match status" value="1"/>
</dbReference>
<dbReference type="Gene3D" id="3.30.160.20">
    <property type="match status" value="1"/>
</dbReference>
<dbReference type="Gene3D" id="3.30.230.10">
    <property type="match status" value="1"/>
</dbReference>
<dbReference type="HAMAP" id="MF_01307_B">
    <property type="entry name" value="Ribosomal_uS5_B"/>
    <property type="match status" value="1"/>
</dbReference>
<dbReference type="InterPro" id="IPR020568">
    <property type="entry name" value="Ribosomal_Su5_D2-typ_SF"/>
</dbReference>
<dbReference type="InterPro" id="IPR000851">
    <property type="entry name" value="Ribosomal_uS5"/>
</dbReference>
<dbReference type="InterPro" id="IPR005712">
    <property type="entry name" value="Ribosomal_uS5_bac-type"/>
</dbReference>
<dbReference type="InterPro" id="IPR005324">
    <property type="entry name" value="Ribosomal_uS5_C"/>
</dbReference>
<dbReference type="InterPro" id="IPR013810">
    <property type="entry name" value="Ribosomal_uS5_N"/>
</dbReference>
<dbReference type="InterPro" id="IPR018192">
    <property type="entry name" value="Ribosomal_uS5_N_CS"/>
</dbReference>
<dbReference type="InterPro" id="IPR014721">
    <property type="entry name" value="Ribsml_uS5_D2-typ_fold_subgr"/>
</dbReference>
<dbReference type="NCBIfam" id="TIGR01021">
    <property type="entry name" value="rpsE_bact"/>
    <property type="match status" value="1"/>
</dbReference>
<dbReference type="PANTHER" id="PTHR48277">
    <property type="entry name" value="MITOCHONDRIAL RIBOSOMAL PROTEIN S5"/>
    <property type="match status" value="1"/>
</dbReference>
<dbReference type="PANTHER" id="PTHR48277:SF1">
    <property type="entry name" value="MITOCHONDRIAL RIBOSOMAL PROTEIN S5"/>
    <property type="match status" value="1"/>
</dbReference>
<dbReference type="Pfam" id="PF00333">
    <property type="entry name" value="Ribosomal_S5"/>
    <property type="match status" value="1"/>
</dbReference>
<dbReference type="Pfam" id="PF03719">
    <property type="entry name" value="Ribosomal_S5_C"/>
    <property type="match status" value="1"/>
</dbReference>
<dbReference type="SUPFAM" id="SSF54768">
    <property type="entry name" value="dsRNA-binding domain-like"/>
    <property type="match status" value="1"/>
</dbReference>
<dbReference type="SUPFAM" id="SSF54211">
    <property type="entry name" value="Ribosomal protein S5 domain 2-like"/>
    <property type="match status" value="1"/>
</dbReference>
<dbReference type="PROSITE" id="PS00585">
    <property type="entry name" value="RIBOSOMAL_S5"/>
    <property type="match status" value="1"/>
</dbReference>
<dbReference type="PROSITE" id="PS50881">
    <property type="entry name" value="S5_DSRBD"/>
    <property type="match status" value="1"/>
</dbReference>
<organism>
    <name type="scientific">Caulobacter vibrioides (strain ATCC 19089 / CIP 103742 / CB 15)</name>
    <name type="common">Caulobacter crescentus</name>
    <dbReference type="NCBI Taxonomy" id="190650"/>
    <lineage>
        <taxon>Bacteria</taxon>
        <taxon>Pseudomonadati</taxon>
        <taxon>Pseudomonadota</taxon>
        <taxon>Alphaproteobacteria</taxon>
        <taxon>Caulobacterales</taxon>
        <taxon>Caulobacteraceae</taxon>
        <taxon>Caulobacter</taxon>
    </lineage>
</organism>
<comment type="function">
    <text evidence="1">With S4 and S12 plays an important role in translational accuracy.</text>
</comment>
<comment type="function">
    <text evidence="1">Located at the back of the 30S subunit body where it stabilizes the conformation of the head with respect to the body.</text>
</comment>
<comment type="subunit">
    <text evidence="1">Part of the 30S ribosomal subunit. Contacts proteins S4 and S8.</text>
</comment>
<comment type="domain">
    <text>The N-terminal domain interacts with the head of the 30S subunit; the C-terminal domain interacts with the body and contacts protein S4. The interaction surface between S4 and S5 is involved in control of translational fidelity.</text>
</comment>
<comment type="similarity">
    <text evidence="1">Belongs to the universal ribosomal protein uS5 family.</text>
</comment>
<name>RS5_CAUVC</name>
<sequence>MARGEQQRGEGGQRRDRRDRNAPEERVDSDIVEKLVHINRVAATVKGGRRFSFAALMVVGDQKGRVGFGHGKAREVPEAIRKATEEAKKTMIRVPLRESRTLHHDGAGRWGAGKVMMRAAPPGTGVIAGGPMRAVLETLGVQDVVAKSTGSSNPYNMVRATFEALKVQSSPRQIAAKRGKKVGDILGRRADGASAPEAIEG</sequence>
<gene>
    <name evidence="1" type="primary">rpsE</name>
    <name type="ordered locus">CC_1265</name>
</gene>
<accession>Q9A8T6</accession>
<protein>
    <recommendedName>
        <fullName evidence="1">Small ribosomal subunit protein uS5</fullName>
    </recommendedName>
    <alternativeName>
        <fullName evidence="3">30S ribosomal protein S5</fullName>
    </alternativeName>
</protein>